<reference key="1">
    <citation type="journal article" date="2004" name="J. Bacteriol.">
        <title>The genome sequence of Mycoplasma hyopneumoniae strain 232, the agent of swine mycoplasmosis.</title>
        <authorList>
            <person name="Minion F.C."/>
            <person name="Lefkowitz E.J."/>
            <person name="Madsen M.L."/>
            <person name="Cleary B.J."/>
            <person name="Swartzell S.M."/>
            <person name="Mahairas G.G."/>
        </authorList>
    </citation>
    <scope>NUCLEOTIDE SEQUENCE [LARGE SCALE GENOMIC DNA]</scope>
    <source>
        <strain>232</strain>
    </source>
</reference>
<comment type="function">
    <text evidence="1">Peptide chain release factor 1 directs the termination of translation in response to the peptide chain termination codons UAG and UAA.</text>
</comment>
<comment type="subcellular location">
    <subcellularLocation>
        <location evidence="1">Cytoplasm</location>
    </subcellularLocation>
</comment>
<comment type="PTM">
    <text evidence="1">Methylated by PrmC. Methylation increases the termination efficiency of RF1.</text>
</comment>
<comment type="similarity">
    <text evidence="1">Belongs to the prokaryotic/mitochondrial release factor family.</text>
</comment>
<organism>
    <name type="scientific">Mesomycoplasma hyopneumoniae (strain 232)</name>
    <name type="common">Mycoplasma hyopneumoniae</name>
    <dbReference type="NCBI Taxonomy" id="295358"/>
    <lineage>
        <taxon>Bacteria</taxon>
        <taxon>Bacillati</taxon>
        <taxon>Mycoplasmatota</taxon>
        <taxon>Mycoplasmoidales</taxon>
        <taxon>Metamycoplasmataceae</taxon>
        <taxon>Mesomycoplasma</taxon>
    </lineage>
</organism>
<feature type="chain" id="PRO_0000177703" description="Peptide chain release factor 1">
    <location>
        <begin position="1"/>
        <end position="361"/>
    </location>
</feature>
<feature type="modified residue" description="N5-methylglutamine" evidence="1">
    <location>
        <position position="238"/>
    </location>
</feature>
<sequence length="361" mass="40870">MEKKMFNSLMKIHQKYQDLKQLLETDQILNDQKQYLQIAKEIASITEIIEVFQKFLDDQKVLEDAKTILIQEDDPELIQLAKVEIATMSKNIEEYEKKLLILMLPKDKNDEKDVIVEIRGAAGGDEANIFVGDLFKMYHKWADSQKAKVKVLSSSLALAGGFSQIIFQISGQKIYSKLKFESGVHRVQRVPATETMGRIHTSTATVTVMPKIDEKIEIEINPSDLKIDTYRSSGAGGQSVNTTDSAVRITHIPTGIVVTSQDERSQIGNKEIAMGILKSKIYNLELQKQQQKQSDFRKLAGSGARSEKIRTYNYPQDRLTDHRINFSTSLKPIIQGNLNPIIEALLAQEKTELILQNYANK</sequence>
<proteinExistence type="inferred from homology"/>
<dbReference type="EMBL" id="AE017332">
    <property type="protein sequence ID" value="AAV27784.1"/>
    <property type="molecule type" value="Genomic_DNA"/>
</dbReference>
<dbReference type="RefSeq" id="WP_011206080.1">
    <property type="nucleotide sequence ID" value="NC_006360.1"/>
</dbReference>
<dbReference type="SMR" id="Q601F9"/>
<dbReference type="KEGG" id="mhy:mhp243"/>
<dbReference type="eggNOG" id="COG0216">
    <property type="taxonomic scope" value="Bacteria"/>
</dbReference>
<dbReference type="HOGENOM" id="CLU_036856_0_1_14"/>
<dbReference type="PhylomeDB" id="Q601F9"/>
<dbReference type="Proteomes" id="UP000006822">
    <property type="component" value="Chromosome"/>
</dbReference>
<dbReference type="GO" id="GO:0005737">
    <property type="term" value="C:cytoplasm"/>
    <property type="evidence" value="ECO:0007669"/>
    <property type="project" value="UniProtKB-SubCell"/>
</dbReference>
<dbReference type="GO" id="GO:0016149">
    <property type="term" value="F:translation release factor activity, codon specific"/>
    <property type="evidence" value="ECO:0007669"/>
    <property type="project" value="UniProtKB-UniRule"/>
</dbReference>
<dbReference type="FunFam" id="3.30.160.20:FF:000004">
    <property type="entry name" value="Peptide chain release factor 1"/>
    <property type="match status" value="1"/>
</dbReference>
<dbReference type="FunFam" id="3.30.70.1660:FF:000002">
    <property type="entry name" value="Peptide chain release factor 1"/>
    <property type="match status" value="1"/>
</dbReference>
<dbReference type="Gene3D" id="3.30.160.20">
    <property type="match status" value="1"/>
</dbReference>
<dbReference type="Gene3D" id="3.30.70.1660">
    <property type="match status" value="1"/>
</dbReference>
<dbReference type="Gene3D" id="6.10.140.1950">
    <property type="match status" value="1"/>
</dbReference>
<dbReference type="HAMAP" id="MF_00093">
    <property type="entry name" value="Rel_fac_1"/>
    <property type="match status" value="1"/>
</dbReference>
<dbReference type="InterPro" id="IPR005139">
    <property type="entry name" value="PCRF"/>
</dbReference>
<dbReference type="InterPro" id="IPR000352">
    <property type="entry name" value="Pep_chain_release_fac_I"/>
</dbReference>
<dbReference type="InterPro" id="IPR045853">
    <property type="entry name" value="Pep_chain_release_fac_I_sf"/>
</dbReference>
<dbReference type="InterPro" id="IPR050057">
    <property type="entry name" value="Prokaryotic/Mito_RF"/>
</dbReference>
<dbReference type="InterPro" id="IPR004373">
    <property type="entry name" value="RF-1"/>
</dbReference>
<dbReference type="NCBIfam" id="TIGR00019">
    <property type="entry name" value="prfA"/>
    <property type="match status" value="1"/>
</dbReference>
<dbReference type="NCBIfam" id="NF001859">
    <property type="entry name" value="PRK00591.1"/>
    <property type="match status" value="1"/>
</dbReference>
<dbReference type="PANTHER" id="PTHR43804">
    <property type="entry name" value="LD18447P"/>
    <property type="match status" value="1"/>
</dbReference>
<dbReference type="PANTHER" id="PTHR43804:SF7">
    <property type="entry name" value="LD18447P"/>
    <property type="match status" value="1"/>
</dbReference>
<dbReference type="Pfam" id="PF03462">
    <property type="entry name" value="PCRF"/>
    <property type="match status" value="1"/>
</dbReference>
<dbReference type="Pfam" id="PF00472">
    <property type="entry name" value="RF-1"/>
    <property type="match status" value="1"/>
</dbReference>
<dbReference type="SMART" id="SM00937">
    <property type="entry name" value="PCRF"/>
    <property type="match status" value="1"/>
</dbReference>
<dbReference type="SUPFAM" id="SSF75620">
    <property type="entry name" value="Release factor"/>
    <property type="match status" value="1"/>
</dbReference>
<dbReference type="PROSITE" id="PS00745">
    <property type="entry name" value="RF_PROK_I"/>
    <property type="match status" value="1"/>
</dbReference>
<protein>
    <recommendedName>
        <fullName evidence="1">Peptide chain release factor 1</fullName>
        <shortName evidence="1">RF-1</shortName>
    </recommendedName>
</protein>
<evidence type="ECO:0000255" key="1">
    <source>
        <dbReference type="HAMAP-Rule" id="MF_00093"/>
    </source>
</evidence>
<keyword id="KW-0963">Cytoplasm</keyword>
<keyword id="KW-0488">Methylation</keyword>
<keyword id="KW-0648">Protein biosynthesis</keyword>
<gene>
    <name evidence="1" type="primary">prfA</name>
    <name type="ordered locus">mhp243</name>
</gene>
<name>RF1_MESH2</name>
<accession>Q601F9</accession>